<protein>
    <recommendedName>
        <fullName evidence="1">ATP synthase F(0) complex subunit a</fullName>
    </recommendedName>
    <alternativeName>
        <fullName>F-ATPase protein 6</fullName>
    </alternativeName>
    <alternativeName>
        <fullName evidence="1">Proton-conducting channel, ATP synthase F(0) complex subunit a</fullName>
    </alternativeName>
</protein>
<proteinExistence type="inferred from homology"/>
<feature type="chain" id="PRO_0000082157" description="ATP synthase F(0) complex subunit a">
    <location>
        <begin position="1"/>
        <end position="227"/>
    </location>
</feature>
<feature type="transmembrane region" description="Helical" evidence="2">
    <location>
        <begin position="14"/>
        <end position="34"/>
    </location>
</feature>
<feature type="transmembrane region" description="Helical" evidence="2">
    <location>
        <begin position="69"/>
        <end position="89"/>
    </location>
</feature>
<feature type="transmembrane region" description="Helical" evidence="2">
    <location>
        <begin position="98"/>
        <end position="118"/>
    </location>
</feature>
<feature type="transmembrane region" description="Helical" evidence="2">
    <location>
        <begin position="139"/>
        <end position="159"/>
    </location>
</feature>
<feature type="transmembrane region" description="Helical" evidence="2">
    <location>
        <begin position="165"/>
        <end position="185"/>
    </location>
</feature>
<feature type="transmembrane region" description="Helical" evidence="2">
    <location>
        <begin position="189"/>
        <end position="209"/>
    </location>
</feature>
<name>ATP6_POLOR</name>
<dbReference type="EMBL" id="U62532">
    <property type="protein sequence ID" value="AAC60310.1"/>
    <property type="molecule type" value="Genomic_DNA"/>
</dbReference>
<dbReference type="PIR" id="T11459">
    <property type="entry name" value="T11459"/>
</dbReference>
<dbReference type="RefSeq" id="NP_008321.1">
    <property type="nucleotide sequence ID" value="NC_001778.1"/>
</dbReference>
<dbReference type="SMR" id="Q95913"/>
<dbReference type="GeneID" id="808032"/>
<dbReference type="CTD" id="4508"/>
<dbReference type="GO" id="GO:0005743">
    <property type="term" value="C:mitochondrial inner membrane"/>
    <property type="evidence" value="ECO:0007669"/>
    <property type="project" value="UniProtKB-SubCell"/>
</dbReference>
<dbReference type="GO" id="GO:0045259">
    <property type="term" value="C:proton-transporting ATP synthase complex"/>
    <property type="evidence" value="ECO:0000250"/>
    <property type="project" value="UniProtKB"/>
</dbReference>
<dbReference type="GO" id="GO:0015252">
    <property type="term" value="F:proton channel activity"/>
    <property type="evidence" value="ECO:0000250"/>
    <property type="project" value="UniProtKB"/>
</dbReference>
<dbReference type="GO" id="GO:0046933">
    <property type="term" value="F:proton-transporting ATP synthase activity, rotational mechanism"/>
    <property type="evidence" value="ECO:0007669"/>
    <property type="project" value="TreeGrafter"/>
</dbReference>
<dbReference type="GO" id="GO:0015986">
    <property type="term" value="P:proton motive force-driven ATP synthesis"/>
    <property type="evidence" value="ECO:0000250"/>
    <property type="project" value="UniProtKB"/>
</dbReference>
<dbReference type="GO" id="GO:1902600">
    <property type="term" value="P:proton transmembrane transport"/>
    <property type="evidence" value="ECO:0000250"/>
    <property type="project" value="UniProtKB"/>
</dbReference>
<dbReference type="CDD" id="cd00310">
    <property type="entry name" value="ATP-synt_Fo_a_6"/>
    <property type="match status" value="1"/>
</dbReference>
<dbReference type="FunFam" id="1.20.120.220:FF:000004">
    <property type="entry name" value="ATP synthase subunit a"/>
    <property type="match status" value="1"/>
</dbReference>
<dbReference type="Gene3D" id="1.20.120.220">
    <property type="entry name" value="ATP synthase, F0 complex, subunit A"/>
    <property type="match status" value="1"/>
</dbReference>
<dbReference type="InterPro" id="IPR000568">
    <property type="entry name" value="ATP_synth_F0_asu"/>
</dbReference>
<dbReference type="InterPro" id="IPR023011">
    <property type="entry name" value="ATP_synth_F0_asu_AS"/>
</dbReference>
<dbReference type="InterPro" id="IPR045083">
    <property type="entry name" value="ATP_synth_F0_asu_bact/mt"/>
</dbReference>
<dbReference type="InterPro" id="IPR035908">
    <property type="entry name" value="F0_ATP_A_sf"/>
</dbReference>
<dbReference type="NCBIfam" id="TIGR01131">
    <property type="entry name" value="ATP_synt_6_or_A"/>
    <property type="match status" value="1"/>
</dbReference>
<dbReference type="PANTHER" id="PTHR11410">
    <property type="entry name" value="ATP SYNTHASE SUBUNIT A"/>
    <property type="match status" value="1"/>
</dbReference>
<dbReference type="PANTHER" id="PTHR11410:SF0">
    <property type="entry name" value="ATP SYNTHASE SUBUNIT A"/>
    <property type="match status" value="1"/>
</dbReference>
<dbReference type="Pfam" id="PF00119">
    <property type="entry name" value="ATP-synt_A"/>
    <property type="match status" value="1"/>
</dbReference>
<dbReference type="PRINTS" id="PR00123">
    <property type="entry name" value="ATPASEA"/>
</dbReference>
<dbReference type="SUPFAM" id="SSF81336">
    <property type="entry name" value="F1F0 ATP synthase subunit A"/>
    <property type="match status" value="1"/>
</dbReference>
<dbReference type="PROSITE" id="PS00449">
    <property type="entry name" value="ATPASE_A"/>
    <property type="match status" value="1"/>
</dbReference>
<comment type="function">
    <text evidence="1">Subunit a, of the mitochondrial membrane ATP synthase complex (F(1)F(0) ATP synthase or Complex V) that produces ATP from ADP in the presence of a proton gradient across the membrane which is generated by electron transport complexes of the respiratory chain. ATP synthase complex consist of a soluble F(1) head domain - the catalytic core - and a membrane F(1) domain - the membrane proton channel. These two domains are linked by a central stalk rotating inside the F(1) region and a stationary peripheral stalk. During catalysis, ATP synthesis in the catalytic domain of F(1) is coupled via a rotary mechanism of the central stalk subunits to proton translocation. With the subunit c (ATP5MC1), forms the proton-conducting channel in the F(0) domain, that contains two crucial half-channels (inlet and outlet) that facilitate proton movement from the mitochondrial intermembrane space (IMS) into the matrix. Protons are taken up via the inlet half-channel and released through the outlet half-channel, following a Grotthuss mechanism.</text>
</comment>
<comment type="catalytic activity">
    <reaction evidence="1">
        <text>H(+)(in) = H(+)(out)</text>
        <dbReference type="Rhea" id="RHEA:34979"/>
        <dbReference type="ChEBI" id="CHEBI:15378"/>
    </reaction>
</comment>
<comment type="subunit">
    <text evidence="1">Component of the ATP synthase complex composed at least of ATP5F1A/subunit alpha, ATP5F1B/subunit beta, ATP5MC1/subunit c (homooctomer), MT-ATP6/subunit a, MT-ATP8/subunit 8, ATP5ME/subunit e, ATP5MF/subunit f, ATP5MG/subunit g, ATP5MK/subunit k, ATP5MJ/subunit j, ATP5F1C/subunit gamma, ATP5F1D/subunit delta, ATP5F1E/subunit epsilon, ATP5PF/subunit F6, ATP5PB/subunit b, ATP5PD/subunit d, ATP5PO/subunit OSCP. ATP synthase complex consists of a soluble F(1) head domain (subunits alpha(3) and beta(3)) - the catalytic core - and a membrane F(0) domain - the membrane proton channel (subunits c, a, 8, e, f, g, k and j). These two domains are linked by a central stalk (subunits gamma, delta, and epsilon) rotating inside the F1 region and a stationary peripheral stalk (subunits F6, b, d, and OSCP). Interacts with DNAJC30; interaction is direct.</text>
</comment>
<comment type="subcellular location">
    <subcellularLocation>
        <location>Mitochondrion inner membrane</location>
        <topology>Multi-pass membrane protein</topology>
    </subcellularLocation>
</comment>
<comment type="similarity">
    <text evidence="3">Belongs to the ATPase A chain family.</text>
</comment>
<sequence length="227" mass="25250">MTLSFLDQFASQSFLGIPLIAIAILIPWMLFPSPYKRWMSNRLITFQSWFIARTTNQLMLPLNTGAHKWAMILTALLLFLMTLNLLGLLPYTFTPTTQLSMNMALAVPLWLATVLIGMRNQPTHSLAHLLPEGTPTPLIPILIIIETISLFIRPLALGVRLTANLTAGHLLIQLISTATFVMLSIMPTIATLTFIVLALLTILEIAVAMIQAYVLVLLLSLYLQENV</sequence>
<accession>Q95913</accession>
<organism>
    <name type="scientific">Polypterus ornatipinnis</name>
    <name type="common">Ornate bichir</name>
    <dbReference type="NCBI Taxonomy" id="49895"/>
    <lineage>
        <taxon>Eukaryota</taxon>
        <taxon>Metazoa</taxon>
        <taxon>Chordata</taxon>
        <taxon>Craniata</taxon>
        <taxon>Vertebrata</taxon>
        <taxon>Euteleostomi</taxon>
        <taxon>Actinopterygii</taxon>
        <taxon>Polypteriformes</taxon>
        <taxon>Polypteridae</taxon>
        <taxon>Polypterus</taxon>
    </lineage>
</organism>
<evidence type="ECO:0000250" key="1">
    <source>
        <dbReference type="UniProtKB" id="P00846"/>
    </source>
</evidence>
<evidence type="ECO:0000255" key="2"/>
<evidence type="ECO:0000305" key="3"/>
<geneLocation type="mitochondrion"/>
<reference key="1">
    <citation type="journal article" date="1996" name="Genetics">
        <title>The complete mitochondrial DNA sequence of the bichir (Polypterus ornatipinnis), a basal ray-finned fish: ancient establishment of the consensus vertebrate gene order.</title>
        <authorList>
            <person name="Noack K."/>
            <person name="Zardoya R."/>
            <person name="Meyer A."/>
        </authorList>
    </citation>
    <scope>NUCLEOTIDE SEQUENCE [GENOMIC DNA]</scope>
</reference>
<keyword id="KW-0066">ATP synthesis</keyword>
<keyword id="KW-0138">CF(0)</keyword>
<keyword id="KW-0375">Hydrogen ion transport</keyword>
<keyword id="KW-0406">Ion transport</keyword>
<keyword id="KW-0472">Membrane</keyword>
<keyword id="KW-0496">Mitochondrion</keyword>
<keyword id="KW-0999">Mitochondrion inner membrane</keyword>
<keyword id="KW-0812">Transmembrane</keyword>
<keyword id="KW-1133">Transmembrane helix</keyword>
<keyword id="KW-0813">Transport</keyword>
<gene>
    <name evidence="1" type="primary">mt-atp6</name>
    <name type="synonym">atp6</name>
    <name type="synonym">atpase6</name>
    <name type="synonym">mtatp6</name>
</gene>